<accession>Q61754</accession>
<accession>A6H6V7</accession>
<accession>Q61755</accession>
<accession>Q9JM69</accession>
<proteinExistence type="evidence at transcript level"/>
<keyword id="KW-1015">Disulfide bond</keyword>
<keyword id="KW-0325">Glycoprotein</keyword>
<keyword id="KW-0378">Hydrolase</keyword>
<keyword id="KW-0645">Protease</keyword>
<keyword id="KW-1185">Reference proteome</keyword>
<keyword id="KW-0720">Serine protease</keyword>
<keyword id="KW-0732">Signal</keyword>
<keyword id="KW-0865">Zymogen</keyword>
<dbReference type="EC" id="3.4.21.35"/>
<dbReference type="EMBL" id="AB039277">
    <property type="protein sequence ID" value="BAA92320.1"/>
    <property type="molecule type" value="mRNA"/>
</dbReference>
<dbReference type="EMBL" id="BC146015">
    <property type="protein sequence ID" value="AAI46016.1"/>
    <property type="molecule type" value="mRNA"/>
</dbReference>
<dbReference type="EMBL" id="BC146019">
    <property type="protein sequence ID" value="AAI46020.1"/>
    <property type="molecule type" value="mRNA"/>
</dbReference>
<dbReference type="EMBL" id="M18619">
    <property type="protein sequence ID" value="AAG11390.1"/>
    <property type="molecule type" value="Genomic_DNA"/>
</dbReference>
<dbReference type="EMBL" id="M18599">
    <property type="protein sequence ID" value="AAG11390.1"/>
    <property type="status" value="JOINED"/>
    <property type="molecule type" value="Genomic_DNA"/>
</dbReference>
<dbReference type="CCDS" id="CCDS21198.1"/>
<dbReference type="PIR" id="I70016">
    <property type="entry name" value="I70016"/>
</dbReference>
<dbReference type="PIR" id="I70017">
    <property type="entry name" value="I70017"/>
</dbReference>
<dbReference type="RefSeq" id="NP_034773.1">
    <property type="nucleotide sequence ID" value="NM_010643.2"/>
</dbReference>
<dbReference type="SMR" id="Q61754"/>
<dbReference type="BioGRID" id="200980">
    <property type="interactions" value="1"/>
</dbReference>
<dbReference type="FunCoup" id="Q61754">
    <property type="interactions" value="76"/>
</dbReference>
<dbReference type="STRING" id="10090.ENSMUSP00000073392"/>
<dbReference type="MEROPS" id="S01.069"/>
<dbReference type="GlyCosmos" id="Q61754">
    <property type="glycosylation" value="3 sites, No reported glycans"/>
</dbReference>
<dbReference type="GlyGen" id="Q61754">
    <property type="glycosylation" value="3 sites"/>
</dbReference>
<dbReference type="iPTMnet" id="Q61754"/>
<dbReference type="PhosphoSitePlus" id="Q61754"/>
<dbReference type="PaxDb" id="10090-ENSMUSP00000073392"/>
<dbReference type="ProteomicsDB" id="269439"/>
<dbReference type="DNASU" id="16617"/>
<dbReference type="Ensembl" id="ENSMUST00000073713.8">
    <property type="protein sequence ID" value="ENSMUSP00000073392.7"/>
    <property type="gene ID" value="ENSMUSG00000063713.8"/>
</dbReference>
<dbReference type="GeneID" id="16617"/>
<dbReference type="KEGG" id="mmu:16617"/>
<dbReference type="UCSC" id="uc009gok.1">
    <property type="organism name" value="mouse"/>
</dbReference>
<dbReference type="AGR" id="MGI:892021"/>
<dbReference type="CTD" id="16617"/>
<dbReference type="MGI" id="MGI:892021">
    <property type="gene designation" value="Klk1b24"/>
</dbReference>
<dbReference type="VEuPathDB" id="HostDB:ENSMUSG00000063713"/>
<dbReference type="eggNOG" id="KOG3627">
    <property type="taxonomic scope" value="Eukaryota"/>
</dbReference>
<dbReference type="GeneTree" id="ENSGT01020000230389"/>
<dbReference type="HOGENOM" id="CLU_006842_1_1_1"/>
<dbReference type="InParanoid" id="Q61754"/>
<dbReference type="OMA" id="FASWIKD"/>
<dbReference type="OrthoDB" id="10061449at2759"/>
<dbReference type="PhylomeDB" id="Q61754"/>
<dbReference type="TreeFam" id="TF331065"/>
<dbReference type="Reactome" id="R-MMU-1592389">
    <property type="pathway name" value="Activation of Matrix Metalloproteinases"/>
</dbReference>
<dbReference type="BioGRID-ORCS" id="16617">
    <property type="hits" value="3 hits in 77 CRISPR screens"/>
</dbReference>
<dbReference type="ChiTaRS" id="Klk1b24">
    <property type="organism name" value="mouse"/>
</dbReference>
<dbReference type="PRO" id="PR:Q61754"/>
<dbReference type="Proteomes" id="UP000000589">
    <property type="component" value="Chromosome 7"/>
</dbReference>
<dbReference type="RNAct" id="Q61754">
    <property type="molecule type" value="protein"/>
</dbReference>
<dbReference type="Bgee" id="ENSMUSG00000063713">
    <property type="expression patterns" value="Expressed in submandibular gland and 39 other cell types or tissues"/>
</dbReference>
<dbReference type="GO" id="GO:0004252">
    <property type="term" value="F:serine-type endopeptidase activity"/>
    <property type="evidence" value="ECO:0000303"/>
    <property type="project" value="UniProtKB"/>
</dbReference>
<dbReference type="GO" id="GO:0006508">
    <property type="term" value="P:proteolysis"/>
    <property type="evidence" value="ECO:0000303"/>
    <property type="project" value="UniProtKB"/>
</dbReference>
<dbReference type="CDD" id="cd00190">
    <property type="entry name" value="Tryp_SPc"/>
    <property type="match status" value="1"/>
</dbReference>
<dbReference type="FunFam" id="2.40.10.10:FF:000032">
    <property type="entry name" value="Kallikrein 1-related peptidase C9"/>
    <property type="match status" value="1"/>
</dbReference>
<dbReference type="FunFam" id="2.40.10.10:FF:000042">
    <property type="entry name" value="Kallikrein 1-related peptidase C9"/>
    <property type="match status" value="1"/>
</dbReference>
<dbReference type="Gene3D" id="2.40.10.10">
    <property type="entry name" value="Trypsin-like serine proteases"/>
    <property type="match status" value="2"/>
</dbReference>
<dbReference type="InterPro" id="IPR009003">
    <property type="entry name" value="Peptidase_S1_PA"/>
</dbReference>
<dbReference type="InterPro" id="IPR043504">
    <property type="entry name" value="Peptidase_S1_PA_chymotrypsin"/>
</dbReference>
<dbReference type="InterPro" id="IPR001314">
    <property type="entry name" value="Peptidase_S1A"/>
</dbReference>
<dbReference type="InterPro" id="IPR001254">
    <property type="entry name" value="Trypsin_dom"/>
</dbReference>
<dbReference type="InterPro" id="IPR018114">
    <property type="entry name" value="TRYPSIN_HIS"/>
</dbReference>
<dbReference type="InterPro" id="IPR033116">
    <property type="entry name" value="TRYPSIN_SER"/>
</dbReference>
<dbReference type="PANTHER" id="PTHR24271:SF47">
    <property type="entry name" value="KALLIKREIN-1"/>
    <property type="match status" value="1"/>
</dbReference>
<dbReference type="PANTHER" id="PTHR24271">
    <property type="entry name" value="KALLIKREIN-RELATED"/>
    <property type="match status" value="1"/>
</dbReference>
<dbReference type="Pfam" id="PF00089">
    <property type="entry name" value="Trypsin"/>
    <property type="match status" value="1"/>
</dbReference>
<dbReference type="PRINTS" id="PR00722">
    <property type="entry name" value="CHYMOTRYPSIN"/>
</dbReference>
<dbReference type="SMART" id="SM00020">
    <property type="entry name" value="Tryp_SPc"/>
    <property type="match status" value="1"/>
</dbReference>
<dbReference type="SUPFAM" id="SSF50494">
    <property type="entry name" value="Trypsin-like serine proteases"/>
    <property type="match status" value="1"/>
</dbReference>
<dbReference type="PROSITE" id="PS50240">
    <property type="entry name" value="TRYPSIN_DOM"/>
    <property type="match status" value="1"/>
</dbReference>
<dbReference type="PROSITE" id="PS00134">
    <property type="entry name" value="TRYPSIN_HIS"/>
    <property type="match status" value="1"/>
</dbReference>
<dbReference type="PROSITE" id="PS00135">
    <property type="entry name" value="TRYPSIN_SER"/>
    <property type="match status" value="1"/>
</dbReference>
<evidence type="ECO:0000250" key="1">
    <source>
        <dbReference type="UniProtKB" id="P36368"/>
    </source>
</evidence>
<evidence type="ECO:0000255" key="2"/>
<evidence type="ECO:0000255" key="3">
    <source>
        <dbReference type="PROSITE-ProRule" id="PRU00274"/>
    </source>
</evidence>
<evidence type="ECO:0000269" key="4">
    <source>
    </source>
</evidence>
<evidence type="ECO:0000269" key="5">
    <source>
    </source>
</evidence>
<evidence type="ECO:0000305" key="6"/>
<evidence type="ECO:0000312" key="7">
    <source>
        <dbReference type="EMBL" id="BAA92320.1"/>
    </source>
</evidence>
<reference evidence="7" key="1">
    <citation type="journal article" date="2000" name="Eur. J. Biochem.">
        <title>Cloning and characterization of mouse Klk27, a novel tissue kallikrein expressed in testicular Leydig cells and exhibiting chymotrypsin-like specificity.</title>
        <authorList>
            <person name="Matsui H."/>
            <person name="Moriyama A."/>
            <person name="Takahashi T."/>
        </authorList>
    </citation>
    <scope>NUCLEOTIDE SEQUENCE [MRNA]</scope>
    <source>
        <tissue evidence="4">Testis</tissue>
    </source>
</reference>
<reference key="2">
    <citation type="journal article" date="2004" name="Genome Res.">
        <title>The status, quality, and expansion of the NIH full-length cDNA project: the Mammalian Gene Collection (MGC).</title>
        <authorList>
            <consortium name="The MGC Project Team"/>
        </authorList>
    </citation>
    <scope>NUCLEOTIDE SEQUENCE [LARGE SCALE MRNA]</scope>
    <source>
        <tissue>Brain</tissue>
    </source>
</reference>
<reference evidence="6" key="3">
    <citation type="journal article" date="1987" name="J. Biol. Chem.">
        <title>Mouse glandular kallikrein genes. Structure and partial sequence analysis of the kallikrein gene locus.</title>
        <authorList>
            <person name="Evans B.A."/>
            <person name="Drinkwater C.C."/>
            <person name="Richards R.I."/>
        </authorList>
    </citation>
    <scope>NUCLEOTIDE SEQUENCE [GENOMIC DNA] OF 17-54 AND 73-124</scope>
    <source>
        <strain evidence="5">BALB/cJ</strain>
        <tissue evidence="5">Liver</tissue>
    </source>
</reference>
<sequence>MWFLILFLALSLGGIDAAPPVQSRVVGGFKCEKNSQPWHVAVFRYNKYICGGVLLNPNWVLTAAHCYGNATSQYNVWLGKNKLFQREPSAQHRWVSKSFPHPDYNMSLLNDDIPQPKDKSNDLMLLRLSEPADITDAVKPIDLPTEEPKLGSTCLASGWGSITPTKWQKPNDLQCVFIKLLPNENCTKPYLHKVTDVMLCAGEMGGGKDTCAGDSGGPLICDGILHGITSWGPVPCGKPNAPAIYTKLIKFASWIKDTMAKNP</sequence>
<comment type="function">
    <text evidence="6">Glandular kallikreins cleave Met-Lys and Arg-Ser bonds in kininogen to release Lys-bradykinin.</text>
</comment>
<comment type="catalytic activity">
    <reaction evidence="6">
        <text>Preferential cleavage of Arg-|-Xaa bonds in small molecule substrates. Highly selective action to release kallidin (lysyl-bradykinin) from kininogen involves hydrolysis of Met-|-Xaa or Leu-|-Xaa.</text>
        <dbReference type="EC" id="3.4.21.35"/>
    </reaction>
</comment>
<comment type="similarity">
    <text evidence="3">Belongs to the peptidase S1 family. Kallikrein subfamily.</text>
</comment>
<organism evidence="7">
    <name type="scientific">Mus musculus</name>
    <name type="common">Mouse</name>
    <dbReference type="NCBI Taxonomy" id="10090"/>
    <lineage>
        <taxon>Eukaryota</taxon>
        <taxon>Metazoa</taxon>
        <taxon>Chordata</taxon>
        <taxon>Craniata</taxon>
        <taxon>Vertebrata</taxon>
        <taxon>Euteleostomi</taxon>
        <taxon>Mammalia</taxon>
        <taxon>Eutheria</taxon>
        <taxon>Euarchontoglires</taxon>
        <taxon>Glires</taxon>
        <taxon>Rodentia</taxon>
        <taxon>Myomorpha</taxon>
        <taxon>Muroidea</taxon>
        <taxon>Muridae</taxon>
        <taxon>Murinae</taxon>
        <taxon>Mus</taxon>
        <taxon>Mus</taxon>
    </lineage>
</organism>
<name>K1B24_MOUSE</name>
<feature type="signal peptide" evidence="2">
    <location>
        <begin position="1"/>
        <end position="17"/>
    </location>
</feature>
<feature type="propeptide" id="PRO_0000027991" description="Activation peptide" evidence="1">
    <location>
        <begin position="18"/>
        <end position="24"/>
    </location>
</feature>
<feature type="chain" id="PRO_0000027992" description="Kallikrein 1-related peptidase b24">
    <location>
        <begin position="25"/>
        <end position="263"/>
    </location>
</feature>
<feature type="domain" description="Peptidase S1" evidence="3">
    <location>
        <begin position="25"/>
        <end position="260"/>
    </location>
</feature>
<feature type="active site" description="Charge relay system" evidence="1">
    <location>
        <position position="65"/>
    </location>
</feature>
<feature type="active site" description="Charge relay system" evidence="1">
    <location>
        <position position="122"/>
    </location>
</feature>
<feature type="active site" description="Charge relay system" evidence="1">
    <location>
        <position position="215"/>
    </location>
</feature>
<feature type="glycosylation site" description="N-linked (GlcNAc...) asparagine" evidence="6">
    <location>
        <position position="69"/>
    </location>
</feature>
<feature type="glycosylation site" description="N-linked (GlcNAc...) asparagine" evidence="2">
    <location>
        <position position="105"/>
    </location>
</feature>
<feature type="glycosylation site" description="N-linked (GlcNAc...) asparagine" evidence="6">
    <location>
        <position position="185"/>
    </location>
</feature>
<feature type="disulfide bond" evidence="1 3">
    <location>
        <begin position="31"/>
        <end position="175"/>
    </location>
</feature>
<feature type="disulfide bond" evidence="1 3">
    <location>
        <begin position="50"/>
        <end position="66"/>
    </location>
</feature>
<feature type="disulfide bond" evidence="1 3">
    <location>
        <begin position="154"/>
        <end position="221"/>
    </location>
</feature>
<feature type="disulfide bond" evidence="1 3">
    <location>
        <begin position="186"/>
        <end position="200"/>
    </location>
</feature>
<feature type="disulfide bond" evidence="1 3">
    <location>
        <begin position="211"/>
        <end position="236"/>
    </location>
</feature>
<protein>
    <recommendedName>
        <fullName>Kallikrein 1-related peptidase b24</fullName>
        <ecNumber>3.4.21.35</ecNumber>
    </recommendedName>
    <alternativeName>
        <fullName>Glandular kallikrein K24</fullName>
        <shortName>mGK-24</shortName>
    </alternativeName>
    <alternativeName>
        <fullName>Tissue kallikrein 24</fullName>
    </alternativeName>
</protein>
<gene>
    <name type="primary">Klk1b24</name>
    <name type="synonym">Klk-24</name>
    <name type="synonym">Klk24</name>
</gene>